<evidence type="ECO:0000255" key="1"/>
<evidence type="ECO:0000305" key="2"/>
<evidence type="ECO:0000305" key="3">
    <source>
    </source>
</evidence>
<comment type="subcellular location">
    <subcellularLocation>
        <location>Membrane</location>
        <topology>Multi-pass membrane protein</topology>
    </subcellularLocation>
</comment>
<comment type="miscellaneous">
    <text evidence="2">Partially overlaps TDP1.</text>
</comment>
<comment type="caution">
    <text evidence="3">Product of a dubious gene prediction unlikely to encode a functional protein. Because of that it is not part of the S.cerevisiae S288c complete/reference proteome set.</text>
</comment>
<proteinExistence type="uncertain"/>
<gene>
    <name type="ordered locus">YBR224W</name>
    <name type="ORF">YBR1521</name>
</gene>
<keyword id="KW-0472">Membrane</keyword>
<keyword id="KW-0732">Signal</keyword>
<keyword id="KW-0812">Transmembrane</keyword>
<keyword id="KW-1133">Transmembrane helix</keyword>
<name>YB74_YEAST</name>
<dbReference type="EMBL" id="Z36092">
    <property type="protein sequence ID" value="CAA85187.1"/>
    <property type="molecule type" value="Genomic_DNA"/>
</dbReference>
<dbReference type="PIR" id="S46100">
    <property type="entry name" value="S46100"/>
</dbReference>
<dbReference type="PaxDb" id="4932-YBR224W"/>
<dbReference type="EnsemblFungi" id="YBR224W_mRNA">
    <property type="protein sequence ID" value="YBR224W"/>
    <property type="gene ID" value="YBR224W"/>
</dbReference>
<dbReference type="AGR" id="SGD:S000000428"/>
<dbReference type="SGD" id="S000000428">
    <property type="gene designation" value="YBR224W"/>
</dbReference>
<dbReference type="HOGENOM" id="CLU_1564118_0_0_1"/>
<dbReference type="GO" id="GO:0016020">
    <property type="term" value="C:membrane"/>
    <property type="evidence" value="ECO:0007669"/>
    <property type="project" value="UniProtKB-SubCell"/>
</dbReference>
<feature type="signal peptide" evidence="1">
    <location>
        <begin position="1"/>
        <end position="24"/>
    </location>
</feature>
<feature type="chain" id="PRO_0000014311" description="Putative uncharacterized membrane protein YBR224W">
    <location>
        <begin position="25"/>
        <end position="171"/>
    </location>
</feature>
<feature type="topological domain" description="Extracellular" evidence="1">
    <location>
        <begin position="25"/>
        <end position="70"/>
    </location>
</feature>
<feature type="transmembrane region" description="Helical" evidence="1">
    <location>
        <begin position="71"/>
        <end position="91"/>
    </location>
</feature>
<feature type="topological domain" description="Cytoplasmic" evidence="1">
    <location>
        <begin position="92"/>
        <end position="140"/>
    </location>
</feature>
<feature type="transmembrane region" description="Helical" evidence="1">
    <location>
        <begin position="141"/>
        <end position="161"/>
    </location>
</feature>
<feature type="topological domain" description="Extracellular" evidence="1">
    <location>
        <begin position="162"/>
        <end position="171"/>
    </location>
</feature>
<reference key="1">
    <citation type="journal article" date="1994" name="EMBO J.">
        <title>Complete DNA sequence of yeast chromosome II.</title>
        <authorList>
            <person name="Feldmann H."/>
            <person name="Aigle M."/>
            <person name="Aljinovic G."/>
            <person name="Andre B."/>
            <person name="Baclet M.C."/>
            <person name="Barthe C."/>
            <person name="Baur A."/>
            <person name="Becam A.-M."/>
            <person name="Biteau N."/>
            <person name="Boles E."/>
            <person name="Brandt T."/>
            <person name="Brendel M."/>
            <person name="Brueckner M."/>
            <person name="Bussereau F."/>
            <person name="Christiansen C."/>
            <person name="Contreras R."/>
            <person name="Crouzet M."/>
            <person name="Cziepluch C."/>
            <person name="Demolis N."/>
            <person name="Delaveau T."/>
            <person name="Doignon F."/>
            <person name="Domdey H."/>
            <person name="Duesterhus S."/>
            <person name="Dubois E."/>
            <person name="Dujon B."/>
            <person name="El Bakkoury M."/>
            <person name="Entian K.-D."/>
            <person name="Feuermann M."/>
            <person name="Fiers W."/>
            <person name="Fobo G.M."/>
            <person name="Fritz C."/>
            <person name="Gassenhuber J."/>
            <person name="Glansdorff N."/>
            <person name="Goffeau A."/>
            <person name="Grivell L.A."/>
            <person name="de Haan M."/>
            <person name="Hein C."/>
            <person name="Herbert C.J."/>
            <person name="Hollenberg C.P."/>
            <person name="Holmstroem K."/>
            <person name="Jacq C."/>
            <person name="Jacquet M."/>
            <person name="Jauniaux J.-C."/>
            <person name="Jonniaux J.-L."/>
            <person name="Kallesoee T."/>
            <person name="Kiesau P."/>
            <person name="Kirchrath L."/>
            <person name="Koetter P."/>
            <person name="Korol S."/>
            <person name="Liebl S."/>
            <person name="Logghe M."/>
            <person name="Lohan A.J.E."/>
            <person name="Louis E.J."/>
            <person name="Li Z.Y."/>
            <person name="Maat M.J."/>
            <person name="Mallet L."/>
            <person name="Mannhaupt G."/>
            <person name="Messenguy F."/>
            <person name="Miosga T."/>
            <person name="Molemans F."/>
            <person name="Mueller S."/>
            <person name="Nasr F."/>
            <person name="Obermaier B."/>
            <person name="Perea J."/>
            <person name="Pierard A."/>
            <person name="Piravandi E."/>
            <person name="Pohl F.M."/>
            <person name="Pohl T.M."/>
            <person name="Potier S."/>
            <person name="Proft M."/>
            <person name="Purnelle B."/>
            <person name="Ramezani Rad M."/>
            <person name="Rieger M."/>
            <person name="Rose M."/>
            <person name="Schaaff-Gerstenschlaeger I."/>
            <person name="Scherens B."/>
            <person name="Schwarzlose C."/>
            <person name="Skala J."/>
            <person name="Slonimski P.P."/>
            <person name="Smits P.H.M."/>
            <person name="Souciet J.-L."/>
            <person name="Steensma H.Y."/>
            <person name="Stucka R."/>
            <person name="Urrestarazu L.A."/>
            <person name="van der Aart Q.J.M."/>
            <person name="Van Dyck L."/>
            <person name="Vassarotti A."/>
            <person name="Vetter I."/>
            <person name="Vierendeels F."/>
            <person name="Vissers S."/>
            <person name="Wagner G."/>
            <person name="de Wergifosse P."/>
            <person name="Wolfe K.H."/>
            <person name="Zagulski M."/>
            <person name="Zimmermann F.K."/>
            <person name="Mewes H.-W."/>
            <person name="Kleine K."/>
        </authorList>
    </citation>
    <scope>NUCLEOTIDE SEQUENCE [LARGE SCALE GENOMIC DNA]</scope>
    <source>
        <strain>ATCC 204508 / S288c</strain>
    </source>
</reference>
<reference key="2">
    <citation type="journal article" date="2014" name="G3 (Bethesda)">
        <title>The reference genome sequence of Saccharomyces cerevisiae: Then and now.</title>
        <authorList>
            <person name="Engel S.R."/>
            <person name="Dietrich F.S."/>
            <person name="Fisk D.G."/>
            <person name="Binkley G."/>
            <person name="Balakrishnan R."/>
            <person name="Costanzo M.C."/>
            <person name="Dwight S.S."/>
            <person name="Hitz B.C."/>
            <person name="Karra K."/>
            <person name="Nash R.S."/>
            <person name="Weng S."/>
            <person name="Wong E.D."/>
            <person name="Lloyd P."/>
            <person name="Skrzypek M.S."/>
            <person name="Miyasato S.R."/>
            <person name="Simison M."/>
            <person name="Cherry J.M."/>
        </authorList>
    </citation>
    <scope>GENOME REANNOTATION</scope>
    <source>
        <strain>ATCC 204508 / S288c</strain>
    </source>
</reference>
<reference key="3">
    <citation type="journal article" date="2006" name="Proc. Natl. Acad. Sci. U.S.A.">
        <title>A global topology map of the Saccharomyces cerevisiae membrane proteome.</title>
        <authorList>
            <person name="Kim H."/>
            <person name="Melen K."/>
            <person name="Oesterberg M."/>
            <person name="von Heijne G."/>
        </authorList>
    </citation>
    <scope>TOPOLOGY [LARGE SCALE ANALYSIS]</scope>
    <source>
        <strain>ATCC 208353 / W303-1A</strain>
    </source>
</reference>
<accession>P38320</accession>
<sequence length="171" mass="19323">MIFDSLTMTQSSLSLLLLTGAIFSISALYLTLFHRCATFSATSDLFLLVPLKFVSRDINDRLKTHYHHSCLGSPFLCIIFLFISPLLNYHFRSLVRPPKIHQKGSIPTLTKNAETRCSHHLKQAAATGEVCKVVVIIKGHILKDCSIFFFIIFPLIYPLFINCSSKYNGLQ</sequence>
<protein>
    <recommendedName>
        <fullName>Putative uncharacterized membrane protein YBR224W</fullName>
    </recommendedName>
</protein>
<organism>
    <name type="scientific">Saccharomyces cerevisiae (strain ATCC 204508 / S288c)</name>
    <name type="common">Baker's yeast</name>
    <dbReference type="NCBI Taxonomy" id="559292"/>
    <lineage>
        <taxon>Eukaryota</taxon>
        <taxon>Fungi</taxon>
        <taxon>Dikarya</taxon>
        <taxon>Ascomycota</taxon>
        <taxon>Saccharomycotina</taxon>
        <taxon>Saccharomycetes</taxon>
        <taxon>Saccharomycetales</taxon>
        <taxon>Saccharomycetaceae</taxon>
        <taxon>Saccharomyces</taxon>
    </lineage>
</organism>